<keyword id="KW-0008">Acetylcholine receptor inhibiting toxin</keyword>
<keyword id="KW-0903">Direct protein sequencing</keyword>
<keyword id="KW-1015">Disulfide bond</keyword>
<keyword id="KW-0872">Ion channel impairing toxin</keyword>
<keyword id="KW-0528">Neurotoxin</keyword>
<keyword id="KW-0629">Postsynaptic neurotoxin</keyword>
<keyword id="KW-0964">Secreted</keyword>
<keyword id="KW-0800">Toxin</keyword>
<proteinExistence type="evidence at protein level"/>
<organism>
    <name type="scientific">Naja sputatrix</name>
    <name type="common">Malayan spitting cobra</name>
    <name type="synonym">Naja naja sputatrix</name>
    <dbReference type="NCBI Taxonomy" id="33626"/>
    <lineage>
        <taxon>Eukaryota</taxon>
        <taxon>Metazoa</taxon>
        <taxon>Chordata</taxon>
        <taxon>Craniata</taxon>
        <taxon>Vertebrata</taxon>
        <taxon>Euteleostomi</taxon>
        <taxon>Lepidosauria</taxon>
        <taxon>Squamata</taxon>
        <taxon>Bifurcata</taxon>
        <taxon>Unidentata</taxon>
        <taxon>Episquamata</taxon>
        <taxon>Toxicofera</taxon>
        <taxon>Serpentes</taxon>
        <taxon>Colubroidea</taxon>
        <taxon>Elapidae</taxon>
        <taxon>Elapinae</taxon>
        <taxon>Naja</taxon>
    </lineage>
</organism>
<sequence length="61" mass="6818">LECHNQQSSQAPTTKTCSGETNCYKKWWSDHRGTIIERGCGCPKVKPGVKLNCCTTDRCNN</sequence>
<reference key="1">
    <citation type="journal article" date="1994" name="Toxicon">
        <title>The amino acid sequences of two postsynaptic neurotoxins isolated from Malayan cobra (Naja naja sputatrix) venom.</title>
        <authorList>
            <person name="Chung M.C.M."/>
            <person name="Tan N.-H."/>
            <person name="Armugam A."/>
        </authorList>
    </citation>
    <scope>PROTEIN SEQUENCE</scope>
    <scope>TOXIC DOSE</scope>
    <scope>SUBCELLULAR LOCATION</scope>
    <source>
        <tissue>Venom</tissue>
    </source>
</reference>
<comment type="function">
    <text evidence="2">Binds to muscle nicotinic acetylcholine receptor (nAChR) and inhibit acetylcholine from binding to the receptor, thereby impairing neuromuscular transmission.</text>
</comment>
<comment type="subcellular location">
    <subcellularLocation>
        <location evidence="3">Secreted</location>
    </subcellularLocation>
</comment>
<comment type="tissue specificity">
    <text evidence="4">Expressed by the venom gland.</text>
</comment>
<comment type="toxic dose">
    <text evidence="3">LD(50) is 0.07 mg/kg by intravenous injection into mice.</text>
</comment>
<comment type="similarity">
    <text evidence="4">Belongs to the three-finger toxin family. Short-chain subfamily. Type I alpha-neurotoxin sub-subfamily.</text>
</comment>
<evidence type="ECO:0000250" key="1">
    <source>
        <dbReference type="UniProtKB" id="P0C1Z0"/>
    </source>
</evidence>
<evidence type="ECO:0000250" key="2">
    <source>
        <dbReference type="UniProtKB" id="P60775"/>
    </source>
</evidence>
<evidence type="ECO:0000269" key="3">
    <source>
    </source>
</evidence>
<evidence type="ECO:0000305" key="4"/>
<name>3S15_NAJSP</name>
<feature type="chain" id="PRO_0000093612" description="Neurotoxin 5" evidence="3">
    <location>
        <begin position="1"/>
        <end position="61"/>
    </location>
</feature>
<feature type="disulfide bond" evidence="1">
    <location>
        <begin position="3"/>
        <end position="23"/>
    </location>
</feature>
<feature type="disulfide bond" evidence="1">
    <location>
        <begin position="17"/>
        <end position="40"/>
    </location>
</feature>
<feature type="disulfide bond" evidence="1">
    <location>
        <begin position="42"/>
        <end position="53"/>
    </location>
</feature>
<feature type="disulfide bond" evidence="1">
    <location>
        <begin position="54"/>
        <end position="59"/>
    </location>
</feature>
<accession>P60772</accession>
<accession>P01428</accession>
<protein>
    <recommendedName>
        <fullName>Neurotoxin 5</fullName>
        <shortName>Toxin 5</shortName>
    </recommendedName>
</protein>
<dbReference type="SMR" id="P60772"/>
<dbReference type="GO" id="GO:0005576">
    <property type="term" value="C:extracellular region"/>
    <property type="evidence" value="ECO:0007669"/>
    <property type="project" value="UniProtKB-SubCell"/>
</dbReference>
<dbReference type="GO" id="GO:0030550">
    <property type="term" value="F:acetylcholine receptor inhibitor activity"/>
    <property type="evidence" value="ECO:0007669"/>
    <property type="project" value="UniProtKB-KW"/>
</dbReference>
<dbReference type="GO" id="GO:0099106">
    <property type="term" value="F:ion channel regulator activity"/>
    <property type="evidence" value="ECO:0007669"/>
    <property type="project" value="UniProtKB-KW"/>
</dbReference>
<dbReference type="GO" id="GO:0090729">
    <property type="term" value="F:toxin activity"/>
    <property type="evidence" value="ECO:0007669"/>
    <property type="project" value="UniProtKB-KW"/>
</dbReference>
<dbReference type="CDD" id="cd00206">
    <property type="entry name" value="TFP_snake_toxin"/>
    <property type="match status" value="1"/>
</dbReference>
<dbReference type="FunFam" id="2.10.60.10:FF:000024">
    <property type="entry name" value="Cytotoxin 1"/>
    <property type="match status" value="1"/>
</dbReference>
<dbReference type="Gene3D" id="2.10.60.10">
    <property type="entry name" value="CD59"/>
    <property type="match status" value="1"/>
</dbReference>
<dbReference type="InterPro" id="IPR003571">
    <property type="entry name" value="Snake_3FTx"/>
</dbReference>
<dbReference type="InterPro" id="IPR045860">
    <property type="entry name" value="Snake_toxin-like_sf"/>
</dbReference>
<dbReference type="InterPro" id="IPR018354">
    <property type="entry name" value="Snake_toxin_con_site"/>
</dbReference>
<dbReference type="InterPro" id="IPR054131">
    <property type="entry name" value="Toxin_cobra-type"/>
</dbReference>
<dbReference type="Pfam" id="PF21947">
    <property type="entry name" value="Toxin_cobra-type"/>
    <property type="match status" value="1"/>
</dbReference>
<dbReference type="SUPFAM" id="SSF57302">
    <property type="entry name" value="Snake toxin-like"/>
    <property type="match status" value="1"/>
</dbReference>
<dbReference type="PROSITE" id="PS00272">
    <property type="entry name" value="SNAKE_TOXIN"/>
    <property type="match status" value="1"/>
</dbReference>